<evidence type="ECO:0000255" key="1">
    <source>
        <dbReference type="HAMAP-Rule" id="MF_00391"/>
    </source>
</evidence>
<evidence type="ECO:0000305" key="2"/>
<comment type="similarity">
    <text evidence="1">Belongs to the bacterial ribosomal protein bL34 family.</text>
</comment>
<name>RL34_RHOPA</name>
<proteinExistence type="inferred from homology"/>
<dbReference type="EMBL" id="BX572595">
    <property type="protein sequence ID" value="CAE26078.1"/>
    <property type="molecule type" value="Genomic_DNA"/>
</dbReference>
<dbReference type="RefSeq" id="WP_006609582.1">
    <property type="nucleotide sequence ID" value="NZ_CP116810.1"/>
</dbReference>
<dbReference type="SMR" id="Q6NC39"/>
<dbReference type="STRING" id="258594.RPA0634"/>
<dbReference type="GeneID" id="66891655"/>
<dbReference type="eggNOG" id="COG0230">
    <property type="taxonomic scope" value="Bacteria"/>
</dbReference>
<dbReference type="HOGENOM" id="CLU_129938_2_0_5"/>
<dbReference type="PhylomeDB" id="Q6NC39"/>
<dbReference type="GO" id="GO:1990904">
    <property type="term" value="C:ribonucleoprotein complex"/>
    <property type="evidence" value="ECO:0007669"/>
    <property type="project" value="UniProtKB-KW"/>
</dbReference>
<dbReference type="GO" id="GO:0005840">
    <property type="term" value="C:ribosome"/>
    <property type="evidence" value="ECO:0007669"/>
    <property type="project" value="UniProtKB-KW"/>
</dbReference>
<dbReference type="GO" id="GO:0003735">
    <property type="term" value="F:structural constituent of ribosome"/>
    <property type="evidence" value="ECO:0007669"/>
    <property type="project" value="InterPro"/>
</dbReference>
<dbReference type="GO" id="GO:0006412">
    <property type="term" value="P:translation"/>
    <property type="evidence" value="ECO:0007669"/>
    <property type="project" value="UniProtKB-UniRule"/>
</dbReference>
<dbReference type="FunFam" id="1.10.287.3980:FF:000001">
    <property type="entry name" value="Mitochondrial ribosomal protein L34"/>
    <property type="match status" value="1"/>
</dbReference>
<dbReference type="Gene3D" id="1.10.287.3980">
    <property type="match status" value="1"/>
</dbReference>
<dbReference type="HAMAP" id="MF_00391">
    <property type="entry name" value="Ribosomal_bL34"/>
    <property type="match status" value="1"/>
</dbReference>
<dbReference type="InterPro" id="IPR000271">
    <property type="entry name" value="Ribosomal_bL34"/>
</dbReference>
<dbReference type="InterPro" id="IPR020939">
    <property type="entry name" value="Ribosomal_bL34_CS"/>
</dbReference>
<dbReference type="NCBIfam" id="TIGR01030">
    <property type="entry name" value="rpmH_bact"/>
    <property type="match status" value="1"/>
</dbReference>
<dbReference type="PANTHER" id="PTHR14503:SF4">
    <property type="entry name" value="LARGE RIBOSOMAL SUBUNIT PROTEIN BL34M"/>
    <property type="match status" value="1"/>
</dbReference>
<dbReference type="PANTHER" id="PTHR14503">
    <property type="entry name" value="MITOCHONDRIAL RIBOSOMAL PROTEIN 34 FAMILY MEMBER"/>
    <property type="match status" value="1"/>
</dbReference>
<dbReference type="Pfam" id="PF00468">
    <property type="entry name" value="Ribosomal_L34"/>
    <property type="match status" value="1"/>
</dbReference>
<dbReference type="PROSITE" id="PS00784">
    <property type="entry name" value="RIBOSOMAL_L34"/>
    <property type="match status" value="1"/>
</dbReference>
<accession>Q6NC39</accession>
<feature type="chain" id="PRO_0000187449" description="Large ribosomal subunit protein bL34">
    <location>
        <begin position="1"/>
        <end position="44"/>
    </location>
</feature>
<organism>
    <name type="scientific">Rhodopseudomonas palustris (strain ATCC BAA-98 / CGA009)</name>
    <dbReference type="NCBI Taxonomy" id="258594"/>
    <lineage>
        <taxon>Bacteria</taxon>
        <taxon>Pseudomonadati</taxon>
        <taxon>Pseudomonadota</taxon>
        <taxon>Alphaproteobacteria</taxon>
        <taxon>Hyphomicrobiales</taxon>
        <taxon>Nitrobacteraceae</taxon>
        <taxon>Rhodopseudomonas</taxon>
    </lineage>
</organism>
<keyword id="KW-0687">Ribonucleoprotein</keyword>
<keyword id="KW-0689">Ribosomal protein</keyword>
<sequence>MKRTYQPSKLVRKRRHGFRARLATTGGRKVLAARRARGRKRLSA</sequence>
<reference key="1">
    <citation type="journal article" date="2004" name="Nat. Biotechnol.">
        <title>Complete genome sequence of the metabolically versatile photosynthetic bacterium Rhodopseudomonas palustris.</title>
        <authorList>
            <person name="Larimer F.W."/>
            <person name="Chain P."/>
            <person name="Hauser L."/>
            <person name="Lamerdin J.E."/>
            <person name="Malfatti S."/>
            <person name="Do L."/>
            <person name="Land M.L."/>
            <person name="Pelletier D.A."/>
            <person name="Beatty J.T."/>
            <person name="Lang A.S."/>
            <person name="Tabita F.R."/>
            <person name="Gibson J.L."/>
            <person name="Hanson T.E."/>
            <person name="Bobst C."/>
            <person name="Torres y Torres J.L."/>
            <person name="Peres C."/>
            <person name="Harrison F.H."/>
            <person name="Gibson J."/>
            <person name="Harwood C.S."/>
        </authorList>
    </citation>
    <scope>NUCLEOTIDE SEQUENCE [LARGE SCALE GENOMIC DNA]</scope>
    <source>
        <strain>ATCC BAA-98 / CGA009</strain>
    </source>
</reference>
<gene>
    <name evidence="1" type="primary">rpmH</name>
    <name type="ordered locus">RPA0634</name>
</gene>
<protein>
    <recommendedName>
        <fullName evidence="1">Large ribosomal subunit protein bL34</fullName>
    </recommendedName>
    <alternativeName>
        <fullName evidence="2">50S ribosomal protein L34</fullName>
    </alternativeName>
</protein>